<keyword id="KW-0413">Isomerase</keyword>
<keyword id="KW-0663">Pyridoxal phosphate</keyword>
<proteinExistence type="inferred from homology"/>
<sequence length="368" mass="41029">MVTGWHRPTWIEIDRAAIRENIKNEQNKLPESVDLWAVVKANAYGHGIIEVARTAKEAGAKGFCVAILDEALALREAGFQDDFILVLGATRKEDANLAAKNHISLTVFREDWLENLTLEATLRIHLKVDSGMGRLGIRTTEEARRIEATSTNDHQLQLEGIYTHFATADQLETSYFEQQLAKFQTILTSLKKRPTYVHTANSAASLLQPQIGFDAIRFGISMYGLTPSTEIKTSLPFELKPALALYTEMVHVKELAPGDSVSYGATYTATEREWVATLPIGYADGLIRHYSGFHVLVDGEPAPIIGRVCMDQTIIKLPREFQTGSKVTIIGKDHGNTVTADDAAQYLDTINYEVTCLLNERIPRKYIH</sequence>
<evidence type="ECO:0000255" key="1">
    <source>
        <dbReference type="HAMAP-Rule" id="MF_01201"/>
    </source>
</evidence>
<dbReference type="EC" id="5.1.1.1" evidence="1"/>
<dbReference type="EMBL" id="AF038438">
    <property type="protein sequence ID" value="AAC31362.1"/>
    <property type="molecule type" value="Genomic_DNA"/>
</dbReference>
<dbReference type="EMBL" id="CP002002">
    <property type="protein sequence ID" value="AEO05885.1"/>
    <property type="molecule type" value="Genomic_DNA"/>
</dbReference>
<dbReference type="RefSeq" id="WP_014600669.1">
    <property type="nucleotide sequence ID" value="NC_017544.1"/>
</dbReference>
<dbReference type="SMR" id="G2K4Q7"/>
<dbReference type="KEGG" id="lmt:LMRG_02310"/>
<dbReference type="HOGENOM" id="CLU_028393_2_1_9"/>
<dbReference type="UniPathway" id="UPA00042">
    <property type="reaction ID" value="UER00497"/>
</dbReference>
<dbReference type="Proteomes" id="UP000001288">
    <property type="component" value="Chromosome"/>
</dbReference>
<dbReference type="GO" id="GO:0005829">
    <property type="term" value="C:cytosol"/>
    <property type="evidence" value="ECO:0007669"/>
    <property type="project" value="TreeGrafter"/>
</dbReference>
<dbReference type="GO" id="GO:0008784">
    <property type="term" value="F:alanine racemase activity"/>
    <property type="evidence" value="ECO:0007669"/>
    <property type="project" value="UniProtKB-UniRule"/>
</dbReference>
<dbReference type="GO" id="GO:0030170">
    <property type="term" value="F:pyridoxal phosphate binding"/>
    <property type="evidence" value="ECO:0007669"/>
    <property type="project" value="UniProtKB-UniRule"/>
</dbReference>
<dbReference type="GO" id="GO:0030632">
    <property type="term" value="P:D-alanine biosynthetic process"/>
    <property type="evidence" value="ECO:0007669"/>
    <property type="project" value="UniProtKB-UniRule"/>
</dbReference>
<dbReference type="GO" id="GO:0009252">
    <property type="term" value="P:peptidoglycan biosynthetic process"/>
    <property type="evidence" value="ECO:0007669"/>
    <property type="project" value="TreeGrafter"/>
</dbReference>
<dbReference type="CDD" id="cd00430">
    <property type="entry name" value="PLPDE_III_AR"/>
    <property type="match status" value="1"/>
</dbReference>
<dbReference type="FunFam" id="2.40.37.10:FF:000006">
    <property type="entry name" value="Alanine racemase"/>
    <property type="match status" value="1"/>
</dbReference>
<dbReference type="FunFam" id="3.20.20.10:FF:000002">
    <property type="entry name" value="Alanine racemase"/>
    <property type="match status" value="1"/>
</dbReference>
<dbReference type="Gene3D" id="3.20.20.10">
    <property type="entry name" value="Alanine racemase"/>
    <property type="match status" value="1"/>
</dbReference>
<dbReference type="Gene3D" id="2.40.37.10">
    <property type="entry name" value="Lyase, Ornithine Decarboxylase, Chain A, domain 1"/>
    <property type="match status" value="1"/>
</dbReference>
<dbReference type="HAMAP" id="MF_01201">
    <property type="entry name" value="Ala_racemase"/>
    <property type="match status" value="1"/>
</dbReference>
<dbReference type="InterPro" id="IPR000821">
    <property type="entry name" value="Ala_racemase"/>
</dbReference>
<dbReference type="InterPro" id="IPR009006">
    <property type="entry name" value="Ala_racemase/Decarboxylase_C"/>
</dbReference>
<dbReference type="InterPro" id="IPR011079">
    <property type="entry name" value="Ala_racemase_C"/>
</dbReference>
<dbReference type="InterPro" id="IPR001608">
    <property type="entry name" value="Ala_racemase_N"/>
</dbReference>
<dbReference type="InterPro" id="IPR020622">
    <property type="entry name" value="Ala_racemase_pyridoxalP-BS"/>
</dbReference>
<dbReference type="InterPro" id="IPR029066">
    <property type="entry name" value="PLP-binding_barrel"/>
</dbReference>
<dbReference type="NCBIfam" id="TIGR00492">
    <property type="entry name" value="alr"/>
    <property type="match status" value="1"/>
</dbReference>
<dbReference type="PANTHER" id="PTHR30511">
    <property type="entry name" value="ALANINE RACEMASE"/>
    <property type="match status" value="1"/>
</dbReference>
<dbReference type="PANTHER" id="PTHR30511:SF0">
    <property type="entry name" value="ALANINE RACEMASE, CATABOLIC-RELATED"/>
    <property type="match status" value="1"/>
</dbReference>
<dbReference type="Pfam" id="PF00842">
    <property type="entry name" value="Ala_racemase_C"/>
    <property type="match status" value="1"/>
</dbReference>
<dbReference type="Pfam" id="PF01168">
    <property type="entry name" value="Ala_racemase_N"/>
    <property type="match status" value="1"/>
</dbReference>
<dbReference type="PRINTS" id="PR00992">
    <property type="entry name" value="ALARACEMASE"/>
</dbReference>
<dbReference type="SMART" id="SM01005">
    <property type="entry name" value="Ala_racemase_C"/>
    <property type="match status" value="1"/>
</dbReference>
<dbReference type="SUPFAM" id="SSF50621">
    <property type="entry name" value="Alanine racemase C-terminal domain-like"/>
    <property type="match status" value="1"/>
</dbReference>
<dbReference type="SUPFAM" id="SSF51419">
    <property type="entry name" value="PLP-binding barrel"/>
    <property type="match status" value="1"/>
</dbReference>
<dbReference type="PROSITE" id="PS00395">
    <property type="entry name" value="ALANINE_RACEMASE"/>
    <property type="match status" value="1"/>
</dbReference>
<name>ALR_LISM4</name>
<protein>
    <recommendedName>
        <fullName evidence="1">Alanine racemase</fullName>
        <ecNumber evidence="1">5.1.1.1</ecNumber>
    </recommendedName>
</protein>
<gene>
    <name type="primary">alr</name>
    <name type="synonym">dal</name>
    <name type="ordered locus">LMRG_02310</name>
</gene>
<organism>
    <name type="scientific">Listeria monocytogenes serotype 1/2a (strain 10403S)</name>
    <dbReference type="NCBI Taxonomy" id="393133"/>
    <lineage>
        <taxon>Bacteria</taxon>
        <taxon>Bacillati</taxon>
        <taxon>Bacillota</taxon>
        <taxon>Bacilli</taxon>
        <taxon>Bacillales</taxon>
        <taxon>Listeriaceae</taxon>
        <taxon>Listeria</taxon>
    </lineage>
</organism>
<reference key="1">
    <citation type="journal article" date="1998" name="Infect. Immun.">
        <title>Pathogenicity and immunogenicity of a Listeria monocytogenes strain that requires D-alanine for growth.</title>
        <authorList>
            <person name="Thompson R.J."/>
            <person name="Bouwer H.G.A."/>
            <person name="Portnoy D.A."/>
            <person name="Frankel F.R."/>
        </authorList>
    </citation>
    <scope>NUCLEOTIDE SEQUENCE [GENOMIC DNA]</scope>
    <source>
        <strain>10403S</strain>
    </source>
</reference>
<reference key="2">
    <citation type="submission" date="2010-04" db="EMBL/GenBank/DDBJ databases">
        <title>The genome sequence of Listeria monocytogenes strain 10403S.</title>
        <authorList>
            <consortium name="The Broad Institute Genome Sequencing Platform"/>
            <consortium name="The Broad Institute Genome Sequencing Center for Infectious Disease"/>
            <person name="Borowsky M."/>
            <person name="Borodovsky M."/>
            <person name="Young S.K."/>
            <person name="Zeng Q."/>
            <person name="Koehrsen M."/>
            <person name="Fitzgerald M."/>
            <person name="Wiedmann M."/>
            <person name="Swaminathan B."/>
            <person name="Lauer P."/>
            <person name="Portnoy D."/>
            <person name="Cossart P."/>
            <person name="Buchrieser C."/>
            <person name="Higgins D."/>
            <person name="Abouelleil A."/>
            <person name="Alvarado L."/>
            <person name="Arachchi H.M."/>
            <person name="Berlin A."/>
            <person name="Borenstein D."/>
            <person name="Brown A."/>
            <person name="Chapman S.B."/>
            <person name="Chen Z."/>
            <person name="Dunbar C.D."/>
            <person name="Engels R."/>
            <person name="Freedman E."/>
            <person name="Gearin G."/>
            <person name="Gellesch M."/>
            <person name="Goldberg J."/>
            <person name="Griggs A."/>
            <person name="Gujja S."/>
            <person name="Heilman E."/>
            <person name="Heiman D."/>
            <person name="Howarth C."/>
            <person name="Jen D."/>
            <person name="Larson L."/>
            <person name="Lui A."/>
            <person name="MacDonald J."/>
            <person name="Mehta T."/>
            <person name="Montmayeur A."/>
            <person name="Neiman D."/>
            <person name="Park D."/>
            <person name="Pearson M."/>
            <person name="Priest M."/>
            <person name="Richards J."/>
            <person name="Roberts A."/>
            <person name="Saif S."/>
            <person name="Shea T."/>
            <person name="Shenoy N."/>
            <person name="Sisk P."/>
            <person name="Stolte C."/>
            <person name="Sykes S."/>
            <person name="Walk T."/>
            <person name="White J."/>
            <person name="Yandava C."/>
            <person name="Haas B."/>
            <person name="Nusbaum C."/>
            <person name="Birren B."/>
        </authorList>
    </citation>
    <scope>NUCLEOTIDE SEQUENCE [LARGE SCALE GENOMIC DNA]</scope>
    <source>
        <strain>10403S</strain>
    </source>
</reference>
<feature type="chain" id="PRO_0000418517" description="Alanine racemase">
    <location>
        <begin position="1"/>
        <end position="368"/>
    </location>
</feature>
<feature type="active site" description="Proton acceptor; specific for D-alanine" evidence="1">
    <location>
        <position position="40"/>
    </location>
</feature>
<feature type="active site" description="Proton acceptor; specific for L-alanine" evidence="1">
    <location>
        <position position="263"/>
    </location>
</feature>
<feature type="binding site" evidence="1">
    <location>
        <position position="134"/>
    </location>
    <ligand>
        <name>substrate</name>
    </ligand>
</feature>
<feature type="binding site" evidence="1">
    <location>
        <position position="310"/>
    </location>
    <ligand>
        <name>substrate</name>
    </ligand>
</feature>
<feature type="modified residue" description="N6-(pyridoxal phosphate)lysine" evidence="1">
    <location>
        <position position="40"/>
    </location>
</feature>
<comment type="function">
    <text evidence="1">Catalyzes the interconversion of L-alanine and D-alanine. May also act on other amino acids.</text>
</comment>
<comment type="catalytic activity">
    <reaction evidence="1">
        <text>L-alanine = D-alanine</text>
        <dbReference type="Rhea" id="RHEA:20249"/>
        <dbReference type="ChEBI" id="CHEBI:57416"/>
        <dbReference type="ChEBI" id="CHEBI:57972"/>
        <dbReference type="EC" id="5.1.1.1"/>
    </reaction>
</comment>
<comment type="cofactor">
    <cofactor evidence="1">
        <name>pyridoxal 5'-phosphate</name>
        <dbReference type="ChEBI" id="CHEBI:597326"/>
    </cofactor>
</comment>
<comment type="pathway">
    <text evidence="1">Amino-acid biosynthesis; D-alanine biosynthesis; D-alanine from L-alanine: step 1/1.</text>
</comment>
<comment type="similarity">
    <text evidence="1">Belongs to the alanine racemase family.</text>
</comment>
<accession>G2K4Q7</accession>
<accession>O85045</accession>